<gene>
    <name evidence="1" type="primary">lpxD</name>
    <name type="ordered locus">Dde_1372</name>
</gene>
<keyword id="KW-0012">Acyltransferase</keyword>
<keyword id="KW-0441">Lipid A biosynthesis</keyword>
<keyword id="KW-0444">Lipid biosynthesis</keyword>
<keyword id="KW-0443">Lipid metabolism</keyword>
<keyword id="KW-1185">Reference proteome</keyword>
<keyword id="KW-0677">Repeat</keyword>
<keyword id="KW-0808">Transferase</keyword>
<accession>Q312H3</accession>
<name>LPXD_OLEA2</name>
<sequence>MKVSDIAGALGLKLKGPDREISGVNTLEAAGPEEISFLANPKYIPMLAGTRAAAVIVSEEYAGQVETALISANPYFDFGRTLHLFARPQGSFSGISDMAYIHPEAEIGGGCTIYPHVYIGARARIGEGTTLFPGCYVGEDCAVGENCLLYPNVTLMAATTVGDDCVLHSGVVLGADGFGFARTEYGIQKIPQIGRVHVGNDVEIGANTAIDRAVLGVTTIGDGTKMDNLVQVGHNVTIGNDCLIVAQVGISGSTHVGDRVTMAGQVGVAGHLTIGDDVTVGPKSGIARSIEPGKTMGGQPAVERDVYMRTLTVMPKLPDMYKRLRKLEKELEALKGESGRDS</sequence>
<comment type="function">
    <text evidence="1">Catalyzes the N-acylation of UDP-3-O-acylglucosamine using 3-hydroxyacyl-ACP as the acyl donor. Is involved in the biosynthesis of lipid A, a phosphorylated glycolipid that anchors the lipopolysaccharide to the outer membrane of the cell.</text>
</comment>
<comment type="catalytic activity">
    <reaction evidence="1">
        <text>a UDP-3-O-[(3R)-3-hydroxyacyl]-alpha-D-glucosamine + a (3R)-hydroxyacyl-[ACP] = a UDP-2-N,3-O-bis[(3R)-3-hydroxyacyl]-alpha-D-glucosamine + holo-[ACP] + H(+)</text>
        <dbReference type="Rhea" id="RHEA:53836"/>
        <dbReference type="Rhea" id="RHEA-COMP:9685"/>
        <dbReference type="Rhea" id="RHEA-COMP:9945"/>
        <dbReference type="ChEBI" id="CHEBI:15378"/>
        <dbReference type="ChEBI" id="CHEBI:64479"/>
        <dbReference type="ChEBI" id="CHEBI:78827"/>
        <dbReference type="ChEBI" id="CHEBI:137740"/>
        <dbReference type="ChEBI" id="CHEBI:137748"/>
        <dbReference type="EC" id="2.3.1.191"/>
    </reaction>
</comment>
<comment type="pathway">
    <text evidence="1">Bacterial outer membrane biogenesis; LPS lipid A biosynthesis.</text>
</comment>
<comment type="subunit">
    <text evidence="1">Homotrimer.</text>
</comment>
<comment type="similarity">
    <text evidence="1">Belongs to the transferase hexapeptide repeat family. LpxD subfamily.</text>
</comment>
<comment type="sequence caution" evidence="2">
    <conflict type="erroneous initiation">
        <sequence resource="EMBL-CDS" id="ABB38173"/>
    </conflict>
</comment>
<protein>
    <recommendedName>
        <fullName evidence="1">UDP-3-O-acylglucosamine N-acyltransferase</fullName>
        <ecNumber evidence="1">2.3.1.191</ecNumber>
    </recommendedName>
</protein>
<feature type="chain" id="PRO_0000264365" description="UDP-3-O-acylglucosamine N-acyltransferase">
    <location>
        <begin position="1"/>
        <end position="342"/>
    </location>
</feature>
<feature type="active site" description="Proton acceptor" evidence="1">
    <location>
        <position position="234"/>
    </location>
</feature>
<evidence type="ECO:0000255" key="1">
    <source>
        <dbReference type="HAMAP-Rule" id="MF_00523"/>
    </source>
</evidence>
<evidence type="ECO:0000305" key="2"/>
<proteinExistence type="inferred from homology"/>
<reference key="1">
    <citation type="journal article" date="2011" name="J. Bacteriol.">
        <title>Complete genome sequence and updated annotation of Desulfovibrio alaskensis G20.</title>
        <authorList>
            <person name="Hauser L.J."/>
            <person name="Land M.L."/>
            <person name="Brown S.D."/>
            <person name="Larimer F."/>
            <person name="Keller K.L."/>
            <person name="Rapp-Giles B.J."/>
            <person name="Price M.N."/>
            <person name="Lin M."/>
            <person name="Bruce D.C."/>
            <person name="Detter J.C."/>
            <person name="Tapia R."/>
            <person name="Han C.S."/>
            <person name="Goodwin L.A."/>
            <person name="Cheng J.F."/>
            <person name="Pitluck S."/>
            <person name="Copeland A."/>
            <person name="Lucas S."/>
            <person name="Nolan M."/>
            <person name="Lapidus A.L."/>
            <person name="Palumbo A.V."/>
            <person name="Wall J.D."/>
        </authorList>
    </citation>
    <scope>NUCLEOTIDE SEQUENCE [LARGE SCALE GENOMIC DNA]</scope>
    <source>
        <strain>ATCC BAA-1058 / DSM 17464 / G20</strain>
    </source>
</reference>
<organism>
    <name type="scientific">Oleidesulfovibrio alaskensis (strain ATCC BAA-1058 / DSM 17464 / G20)</name>
    <name type="common">Desulfovibrio alaskensis</name>
    <dbReference type="NCBI Taxonomy" id="207559"/>
    <lineage>
        <taxon>Bacteria</taxon>
        <taxon>Pseudomonadati</taxon>
        <taxon>Thermodesulfobacteriota</taxon>
        <taxon>Desulfovibrionia</taxon>
        <taxon>Desulfovibrionales</taxon>
        <taxon>Desulfovibrionaceae</taxon>
        <taxon>Oleidesulfovibrio</taxon>
    </lineage>
</organism>
<dbReference type="EC" id="2.3.1.191" evidence="1"/>
<dbReference type="EMBL" id="CP000112">
    <property type="protein sequence ID" value="ABB38173.1"/>
    <property type="status" value="ALT_INIT"/>
    <property type="molecule type" value="Genomic_DNA"/>
</dbReference>
<dbReference type="RefSeq" id="WP_041277132.1">
    <property type="nucleotide sequence ID" value="NC_007519.1"/>
</dbReference>
<dbReference type="SMR" id="Q312H3"/>
<dbReference type="STRING" id="207559.Dde_1372"/>
<dbReference type="KEGG" id="dde:Dde_1372"/>
<dbReference type="eggNOG" id="COG1044">
    <property type="taxonomic scope" value="Bacteria"/>
</dbReference>
<dbReference type="HOGENOM" id="CLU_049865_0_0_7"/>
<dbReference type="UniPathway" id="UPA00973"/>
<dbReference type="Proteomes" id="UP000002710">
    <property type="component" value="Chromosome"/>
</dbReference>
<dbReference type="GO" id="GO:0016020">
    <property type="term" value="C:membrane"/>
    <property type="evidence" value="ECO:0007669"/>
    <property type="project" value="GOC"/>
</dbReference>
<dbReference type="GO" id="GO:0016410">
    <property type="term" value="F:N-acyltransferase activity"/>
    <property type="evidence" value="ECO:0007669"/>
    <property type="project" value="InterPro"/>
</dbReference>
<dbReference type="GO" id="GO:0009245">
    <property type="term" value="P:lipid A biosynthetic process"/>
    <property type="evidence" value="ECO:0007669"/>
    <property type="project" value="UniProtKB-UniRule"/>
</dbReference>
<dbReference type="CDD" id="cd03352">
    <property type="entry name" value="LbH_LpxD"/>
    <property type="match status" value="1"/>
</dbReference>
<dbReference type="Gene3D" id="2.160.10.10">
    <property type="entry name" value="Hexapeptide repeat proteins"/>
    <property type="match status" value="1"/>
</dbReference>
<dbReference type="Gene3D" id="3.40.1390.10">
    <property type="entry name" value="MurE/MurF, N-terminal domain"/>
    <property type="match status" value="1"/>
</dbReference>
<dbReference type="HAMAP" id="MF_00523">
    <property type="entry name" value="LpxD"/>
    <property type="match status" value="1"/>
</dbReference>
<dbReference type="InterPro" id="IPR001451">
    <property type="entry name" value="Hexapep"/>
</dbReference>
<dbReference type="InterPro" id="IPR007691">
    <property type="entry name" value="LpxD"/>
</dbReference>
<dbReference type="InterPro" id="IPR011004">
    <property type="entry name" value="Trimer_LpxA-like_sf"/>
</dbReference>
<dbReference type="InterPro" id="IPR020573">
    <property type="entry name" value="UDP_GlcNAc_AcTrfase_non-rep"/>
</dbReference>
<dbReference type="NCBIfam" id="TIGR01853">
    <property type="entry name" value="lipid_A_lpxD"/>
    <property type="match status" value="1"/>
</dbReference>
<dbReference type="NCBIfam" id="NF002060">
    <property type="entry name" value="PRK00892.1"/>
    <property type="match status" value="1"/>
</dbReference>
<dbReference type="PANTHER" id="PTHR43378">
    <property type="entry name" value="UDP-3-O-ACYLGLUCOSAMINE N-ACYLTRANSFERASE"/>
    <property type="match status" value="1"/>
</dbReference>
<dbReference type="PANTHER" id="PTHR43378:SF2">
    <property type="entry name" value="UDP-3-O-ACYLGLUCOSAMINE N-ACYLTRANSFERASE 1, MITOCHONDRIAL-RELATED"/>
    <property type="match status" value="1"/>
</dbReference>
<dbReference type="Pfam" id="PF00132">
    <property type="entry name" value="Hexapep"/>
    <property type="match status" value="3"/>
</dbReference>
<dbReference type="Pfam" id="PF04613">
    <property type="entry name" value="LpxD"/>
    <property type="match status" value="1"/>
</dbReference>
<dbReference type="SUPFAM" id="SSF51161">
    <property type="entry name" value="Trimeric LpxA-like enzymes"/>
    <property type="match status" value="1"/>
</dbReference>